<comment type="function">
    <text evidence="1">Part of the ABC transporter complex MetNIQ involved in methionine import. Responsible for energy coupling to the transport system.</text>
</comment>
<comment type="catalytic activity">
    <reaction evidence="1">
        <text>L-methionine(out) + ATP + H2O = L-methionine(in) + ADP + phosphate + H(+)</text>
        <dbReference type="Rhea" id="RHEA:29779"/>
        <dbReference type="ChEBI" id="CHEBI:15377"/>
        <dbReference type="ChEBI" id="CHEBI:15378"/>
        <dbReference type="ChEBI" id="CHEBI:30616"/>
        <dbReference type="ChEBI" id="CHEBI:43474"/>
        <dbReference type="ChEBI" id="CHEBI:57844"/>
        <dbReference type="ChEBI" id="CHEBI:456216"/>
        <dbReference type="EC" id="7.4.2.11"/>
    </reaction>
</comment>
<comment type="catalytic activity">
    <reaction evidence="1">
        <text>D-methionine(out) + ATP + H2O = D-methionine(in) + ADP + phosphate + H(+)</text>
        <dbReference type="Rhea" id="RHEA:29767"/>
        <dbReference type="ChEBI" id="CHEBI:15377"/>
        <dbReference type="ChEBI" id="CHEBI:15378"/>
        <dbReference type="ChEBI" id="CHEBI:30616"/>
        <dbReference type="ChEBI" id="CHEBI:43474"/>
        <dbReference type="ChEBI" id="CHEBI:57932"/>
        <dbReference type="ChEBI" id="CHEBI:456216"/>
        <dbReference type="EC" id="7.4.2.11"/>
    </reaction>
</comment>
<comment type="subunit">
    <text evidence="1">The complex is composed of two ATP-binding proteins (MetN), two transmembrane proteins (MetI) and a solute-binding protein (MetQ).</text>
</comment>
<comment type="subcellular location">
    <subcellularLocation>
        <location evidence="1">Cell membrane</location>
        <topology evidence="1">Peripheral membrane protein</topology>
    </subcellularLocation>
</comment>
<comment type="similarity">
    <text evidence="1">Belongs to the ABC transporter superfamily. Methionine importer (TC 3.A.1.24) family.</text>
</comment>
<evidence type="ECO:0000255" key="1">
    <source>
        <dbReference type="HAMAP-Rule" id="MF_01719"/>
    </source>
</evidence>
<feature type="chain" id="PRO_0000270414" description="Methionine import ATP-binding protein MetN">
    <location>
        <begin position="1"/>
        <end position="354"/>
    </location>
</feature>
<feature type="domain" description="ABC transporter" evidence="1">
    <location>
        <begin position="8"/>
        <end position="250"/>
    </location>
</feature>
<feature type="binding site" evidence="1">
    <location>
        <begin position="42"/>
        <end position="49"/>
    </location>
    <ligand>
        <name>ATP</name>
        <dbReference type="ChEBI" id="CHEBI:30616"/>
    </ligand>
</feature>
<name>METN_STRMU</name>
<protein>
    <recommendedName>
        <fullName evidence="1">Methionine import ATP-binding protein MetN</fullName>
        <ecNumber evidence="1">7.4.2.11</ecNumber>
    </recommendedName>
</protein>
<keyword id="KW-0029">Amino-acid transport</keyword>
<keyword id="KW-0067">ATP-binding</keyword>
<keyword id="KW-1003">Cell membrane</keyword>
<keyword id="KW-0472">Membrane</keyword>
<keyword id="KW-0547">Nucleotide-binding</keyword>
<keyword id="KW-1185">Reference proteome</keyword>
<keyword id="KW-1278">Translocase</keyword>
<keyword id="KW-0813">Transport</keyword>
<dbReference type="EC" id="7.4.2.11" evidence="1"/>
<dbReference type="EMBL" id="AF397166">
    <property type="protein sequence ID" value="AAL04079.1"/>
    <property type="molecule type" value="Genomic_DNA"/>
</dbReference>
<dbReference type="EMBL" id="AE014133">
    <property type="protein sequence ID" value="AAN59549.1"/>
    <property type="molecule type" value="Genomic_DNA"/>
</dbReference>
<dbReference type="RefSeq" id="NP_722243.1">
    <property type="nucleotide sequence ID" value="NC_004350.2"/>
</dbReference>
<dbReference type="RefSeq" id="WP_002262135.1">
    <property type="nucleotide sequence ID" value="NC_004350.2"/>
</dbReference>
<dbReference type="SMR" id="Q93DA2"/>
<dbReference type="STRING" id="210007.SMU_1939c"/>
<dbReference type="KEGG" id="smu:SMU_1939c"/>
<dbReference type="PATRIC" id="fig|210007.7.peg.1724"/>
<dbReference type="eggNOG" id="COG1135">
    <property type="taxonomic scope" value="Bacteria"/>
</dbReference>
<dbReference type="HOGENOM" id="CLU_000604_1_3_9"/>
<dbReference type="OrthoDB" id="9802264at2"/>
<dbReference type="PhylomeDB" id="Q93DA2"/>
<dbReference type="Proteomes" id="UP000002512">
    <property type="component" value="Chromosome"/>
</dbReference>
<dbReference type="GO" id="GO:0005886">
    <property type="term" value="C:plasma membrane"/>
    <property type="evidence" value="ECO:0007669"/>
    <property type="project" value="UniProtKB-SubCell"/>
</dbReference>
<dbReference type="GO" id="GO:0033232">
    <property type="term" value="F:ABC-type D-methionine transporter activity"/>
    <property type="evidence" value="ECO:0007669"/>
    <property type="project" value="UniProtKB-EC"/>
</dbReference>
<dbReference type="GO" id="GO:0005524">
    <property type="term" value="F:ATP binding"/>
    <property type="evidence" value="ECO:0007669"/>
    <property type="project" value="UniProtKB-KW"/>
</dbReference>
<dbReference type="GO" id="GO:0016887">
    <property type="term" value="F:ATP hydrolysis activity"/>
    <property type="evidence" value="ECO:0007669"/>
    <property type="project" value="InterPro"/>
</dbReference>
<dbReference type="CDD" id="cd03258">
    <property type="entry name" value="ABC_MetN_methionine_transporter"/>
    <property type="match status" value="1"/>
</dbReference>
<dbReference type="FunFam" id="3.40.50.300:FF:000056">
    <property type="entry name" value="Cell division ATP-binding protein FtsE"/>
    <property type="match status" value="1"/>
</dbReference>
<dbReference type="Gene3D" id="3.30.70.260">
    <property type="match status" value="1"/>
</dbReference>
<dbReference type="Gene3D" id="3.40.50.300">
    <property type="entry name" value="P-loop containing nucleotide triphosphate hydrolases"/>
    <property type="match status" value="1"/>
</dbReference>
<dbReference type="InterPro" id="IPR003593">
    <property type="entry name" value="AAA+_ATPase"/>
</dbReference>
<dbReference type="InterPro" id="IPR003439">
    <property type="entry name" value="ABC_transporter-like_ATP-bd"/>
</dbReference>
<dbReference type="InterPro" id="IPR017871">
    <property type="entry name" value="ABC_transporter-like_CS"/>
</dbReference>
<dbReference type="InterPro" id="IPR045865">
    <property type="entry name" value="ACT-like_dom_sf"/>
</dbReference>
<dbReference type="InterPro" id="IPR041701">
    <property type="entry name" value="MetN_ABC"/>
</dbReference>
<dbReference type="InterPro" id="IPR050086">
    <property type="entry name" value="MetN_ABC_transporter-like"/>
</dbReference>
<dbReference type="InterPro" id="IPR018449">
    <property type="entry name" value="NIL_domain"/>
</dbReference>
<dbReference type="InterPro" id="IPR027417">
    <property type="entry name" value="P-loop_NTPase"/>
</dbReference>
<dbReference type="PANTHER" id="PTHR43166">
    <property type="entry name" value="AMINO ACID IMPORT ATP-BINDING PROTEIN"/>
    <property type="match status" value="1"/>
</dbReference>
<dbReference type="PANTHER" id="PTHR43166:SF30">
    <property type="entry name" value="METHIONINE IMPORT ATP-BINDING PROTEIN METN"/>
    <property type="match status" value="1"/>
</dbReference>
<dbReference type="Pfam" id="PF00005">
    <property type="entry name" value="ABC_tran"/>
    <property type="match status" value="1"/>
</dbReference>
<dbReference type="Pfam" id="PF09383">
    <property type="entry name" value="NIL"/>
    <property type="match status" value="1"/>
</dbReference>
<dbReference type="SMART" id="SM00382">
    <property type="entry name" value="AAA"/>
    <property type="match status" value="1"/>
</dbReference>
<dbReference type="SMART" id="SM00930">
    <property type="entry name" value="NIL"/>
    <property type="match status" value="1"/>
</dbReference>
<dbReference type="SUPFAM" id="SSF55021">
    <property type="entry name" value="ACT-like"/>
    <property type="match status" value="1"/>
</dbReference>
<dbReference type="SUPFAM" id="SSF52540">
    <property type="entry name" value="P-loop containing nucleoside triphosphate hydrolases"/>
    <property type="match status" value="1"/>
</dbReference>
<dbReference type="PROSITE" id="PS00211">
    <property type="entry name" value="ABC_TRANSPORTER_1"/>
    <property type="match status" value="1"/>
</dbReference>
<dbReference type="PROSITE" id="PS50893">
    <property type="entry name" value="ABC_TRANSPORTER_2"/>
    <property type="match status" value="1"/>
</dbReference>
<dbReference type="PROSITE" id="PS51264">
    <property type="entry name" value="METN"/>
    <property type="match status" value="1"/>
</dbReference>
<gene>
    <name evidence="1" type="primary">metN</name>
    <name type="synonym">atmD</name>
    <name type="ordered locus">SMU_1939c</name>
</gene>
<reference key="1">
    <citation type="journal article" date="2002" name="J. Dent. Res.">
        <title>Novel sucrose-dependent adhesion co-factors in Streptococcus mutans.</title>
        <authorList>
            <person name="Tao L."/>
            <person name="Tanzer J.M."/>
        </authorList>
    </citation>
    <scope>NUCLEOTIDE SEQUENCE [GENOMIC DNA]</scope>
    <source>
        <strain>LT11</strain>
    </source>
</reference>
<reference key="2">
    <citation type="journal article" date="2002" name="Proc. Natl. Acad. Sci. U.S.A.">
        <title>Genome sequence of Streptococcus mutans UA159, a cariogenic dental pathogen.</title>
        <authorList>
            <person name="Ajdic D.J."/>
            <person name="McShan W.M."/>
            <person name="McLaughlin R.E."/>
            <person name="Savic G."/>
            <person name="Chang J."/>
            <person name="Carson M.B."/>
            <person name="Primeaux C."/>
            <person name="Tian R."/>
            <person name="Kenton S."/>
            <person name="Jia H.G."/>
            <person name="Lin S.P."/>
            <person name="Qian Y."/>
            <person name="Li S."/>
            <person name="Zhu H."/>
            <person name="Najar F.Z."/>
            <person name="Lai H."/>
            <person name="White J."/>
            <person name="Roe B.A."/>
            <person name="Ferretti J.J."/>
        </authorList>
    </citation>
    <scope>NUCLEOTIDE SEQUENCE [LARGE SCALE GENOMIC DNA]</scope>
    <source>
        <strain>ATCC 700610 / UA159</strain>
    </source>
</reference>
<sequence>MSKAIIKLDHIDITFHQKKRTIEAVKGVTVHINQGDIYGIVGYSGAGKSTLVRVINLLQTPTKGKITVDQDVIFENGEKRLSSQELRKKRHEIGMIFQHFNLMAQKTARQNVAFALRHSNLSAAQKESKVTELLELVGLTDRAENYPSQLSGGQKQRVAIARALANDPKILISDEATSALDPKTTKQILALLQDLNKKLGLTVVMITHEMQIVKDICNRVAVMQEGSLIEEGSVLDIFSNPREDLTKDFIKTATGIEEALIKIKQQEIVKNLPANAALVQLKYAGKTTDEPILNNLYKKYQVTANILYGNIEILEKTPVGEMIVILEGAATNIDQALNDLTHSDLTVTVLKRGV</sequence>
<accession>Q93DA2</accession>
<accession>Q7CE87</accession>
<organism>
    <name type="scientific">Streptococcus mutans serotype c (strain ATCC 700610 / UA159)</name>
    <dbReference type="NCBI Taxonomy" id="210007"/>
    <lineage>
        <taxon>Bacteria</taxon>
        <taxon>Bacillati</taxon>
        <taxon>Bacillota</taxon>
        <taxon>Bacilli</taxon>
        <taxon>Lactobacillales</taxon>
        <taxon>Streptococcaceae</taxon>
        <taxon>Streptococcus</taxon>
    </lineage>
</organism>
<proteinExistence type="inferred from homology"/>